<reference key="1">
    <citation type="submission" date="2006-06" db="EMBL/GenBank/DDBJ databases">
        <title>Complete sequence of Pseudoalteromonas atlantica T6c.</title>
        <authorList>
            <consortium name="US DOE Joint Genome Institute"/>
            <person name="Copeland A."/>
            <person name="Lucas S."/>
            <person name="Lapidus A."/>
            <person name="Barry K."/>
            <person name="Detter J.C."/>
            <person name="Glavina del Rio T."/>
            <person name="Hammon N."/>
            <person name="Israni S."/>
            <person name="Dalin E."/>
            <person name="Tice H."/>
            <person name="Pitluck S."/>
            <person name="Saunders E."/>
            <person name="Brettin T."/>
            <person name="Bruce D."/>
            <person name="Han C."/>
            <person name="Tapia R."/>
            <person name="Gilna P."/>
            <person name="Schmutz J."/>
            <person name="Larimer F."/>
            <person name="Land M."/>
            <person name="Hauser L."/>
            <person name="Kyrpides N."/>
            <person name="Kim E."/>
            <person name="Karls A.C."/>
            <person name="Bartlett D."/>
            <person name="Higgins B.P."/>
            <person name="Richardson P."/>
        </authorList>
    </citation>
    <scope>NUCLEOTIDE SEQUENCE [LARGE SCALE GENOMIC DNA]</scope>
    <source>
        <strain>T6c / ATCC BAA-1087</strain>
    </source>
</reference>
<keyword id="KW-0963">Cytoplasm</keyword>
<keyword id="KW-0342">GTP-binding</keyword>
<keyword id="KW-0547">Nucleotide-binding</keyword>
<keyword id="KW-0648">Protein biosynthesis</keyword>
<name>RF3_PSEA6</name>
<accession>Q15W54</accession>
<proteinExistence type="inferred from homology"/>
<organism>
    <name type="scientific">Pseudoalteromonas atlantica (strain T6c / ATCC BAA-1087)</name>
    <dbReference type="NCBI Taxonomy" id="3042615"/>
    <lineage>
        <taxon>Bacteria</taxon>
        <taxon>Pseudomonadati</taxon>
        <taxon>Pseudomonadota</taxon>
        <taxon>Gammaproteobacteria</taxon>
        <taxon>Alteromonadales</taxon>
        <taxon>Alteromonadaceae</taxon>
        <taxon>Paraglaciecola</taxon>
    </lineage>
</organism>
<comment type="function">
    <text evidence="1">Increases the formation of ribosomal termination complexes and stimulates activities of RF-1 and RF-2. It binds guanine nucleotides and has strong preference for UGA stop codons. It may interact directly with the ribosome. The stimulation of RF-1 and RF-2 is significantly reduced by GTP and GDP, but not by GMP.</text>
</comment>
<comment type="subcellular location">
    <subcellularLocation>
        <location evidence="1">Cytoplasm</location>
    </subcellularLocation>
</comment>
<comment type="similarity">
    <text evidence="1">Belongs to the TRAFAC class translation factor GTPase superfamily. Classic translation factor GTPase family. PrfC subfamily.</text>
</comment>
<evidence type="ECO:0000255" key="1">
    <source>
        <dbReference type="HAMAP-Rule" id="MF_00072"/>
    </source>
</evidence>
<protein>
    <recommendedName>
        <fullName evidence="1">Peptide chain release factor 3</fullName>
        <shortName evidence="1">RF-3</shortName>
    </recommendedName>
</protein>
<gene>
    <name evidence="1" type="primary">prfC</name>
    <name type="ordered locus">Patl_1358</name>
</gene>
<sequence length="528" mass="59409">MSNALVPQEVSRRRTFAIISHPDAGKTTITEKVLLFGNALQRAGTVKGKKSGQHAKSDWMEMEKERGISVTTSVMQFPYSDCLVNLLDTPGHEDFSEDTYRTLTAVDSCLMVIDAAKGVEARTIKLMEVTRLRDTPIITFMNKLDRDTRDPIDLLDEVESVLNIKCAPITWPIGMGKEFKGVYHLLRDETILYSTGQGHTIQEKRVIKGLDNPELDTAIGDYAEELRDMLDLVKGASHEFNHEEFIAGELTPVFFGTAMGNFGVDHMLDGLVDWAPSPQGRETDQGKVEAKDEKFSGFVFKIQANMDPKHRDRIAFCRIVSGKYQKGMKMHQSRIGKDVRISDALTFLAGDRELLEEAYAGDIIGLHNHGSIQIGDTFTSGDKFRFAGIPNFAPELFKRIRLRDPLKQKQLLKGLIQLSEEGAVQVFRPLQNNDLIVGAVGVLQFDVVVARLKGEYNVDAMYEHINVATARWIYGKDERKVDEFRRKAEANLALDGGDNLTYIAPTMVNLSLAQERYPEIEFHQTREH</sequence>
<feature type="chain" id="PRO_1000023666" description="Peptide chain release factor 3">
    <location>
        <begin position="1"/>
        <end position="528"/>
    </location>
</feature>
<feature type="domain" description="tr-type G">
    <location>
        <begin position="11"/>
        <end position="279"/>
    </location>
</feature>
<feature type="binding site" evidence="1">
    <location>
        <begin position="20"/>
        <end position="27"/>
    </location>
    <ligand>
        <name>GTP</name>
        <dbReference type="ChEBI" id="CHEBI:37565"/>
    </ligand>
</feature>
<feature type="binding site" evidence="1">
    <location>
        <begin position="88"/>
        <end position="92"/>
    </location>
    <ligand>
        <name>GTP</name>
        <dbReference type="ChEBI" id="CHEBI:37565"/>
    </ligand>
</feature>
<feature type="binding site" evidence="1">
    <location>
        <begin position="142"/>
        <end position="145"/>
    </location>
    <ligand>
        <name>GTP</name>
        <dbReference type="ChEBI" id="CHEBI:37565"/>
    </ligand>
</feature>
<dbReference type="EMBL" id="CP000388">
    <property type="protein sequence ID" value="ABG39884.1"/>
    <property type="molecule type" value="Genomic_DNA"/>
</dbReference>
<dbReference type="RefSeq" id="WP_011574203.1">
    <property type="nucleotide sequence ID" value="NC_008228.1"/>
</dbReference>
<dbReference type="SMR" id="Q15W54"/>
<dbReference type="STRING" id="342610.Patl_1358"/>
<dbReference type="KEGG" id="pat:Patl_1358"/>
<dbReference type="eggNOG" id="COG4108">
    <property type="taxonomic scope" value="Bacteria"/>
</dbReference>
<dbReference type="HOGENOM" id="CLU_002794_2_1_6"/>
<dbReference type="OrthoDB" id="9804431at2"/>
<dbReference type="Proteomes" id="UP000001981">
    <property type="component" value="Chromosome"/>
</dbReference>
<dbReference type="GO" id="GO:0005829">
    <property type="term" value="C:cytosol"/>
    <property type="evidence" value="ECO:0007669"/>
    <property type="project" value="TreeGrafter"/>
</dbReference>
<dbReference type="GO" id="GO:0005525">
    <property type="term" value="F:GTP binding"/>
    <property type="evidence" value="ECO:0007669"/>
    <property type="project" value="UniProtKB-UniRule"/>
</dbReference>
<dbReference type="GO" id="GO:0003924">
    <property type="term" value="F:GTPase activity"/>
    <property type="evidence" value="ECO:0007669"/>
    <property type="project" value="InterPro"/>
</dbReference>
<dbReference type="GO" id="GO:0097216">
    <property type="term" value="F:guanosine tetraphosphate binding"/>
    <property type="evidence" value="ECO:0007669"/>
    <property type="project" value="UniProtKB-ARBA"/>
</dbReference>
<dbReference type="GO" id="GO:0016150">
    <property type="term" value="F:translation release factor activity, codon nonspecific"/>
    <property type="evidence" value="ECO:0007669"/>
    <property type="project" value="TreeGrafter"/>
</dbReference>
<dbReference type="GO" id="GO:0016149">
    <property type="term" value="F:translation release factor activity, codon specific"/>
    <property type="evidence" value="ECO:0007669"/>
    <property type="project" value="UniProtKB-UniRule"/>
</dbReference>
<dbReference type="GO" id="GO:0006449">
    <property type="term" value="P:regulation of translational termination"/>
    <property type="evidence" value="ECO:0007669"/>
    <property type="project" value="UniProtKB-UniRule"/>
</dbReference>
<dbReference type="CDD" id="cd04169">
    <property type="entry name" value="RF3"/>
    <property type="match status" value="1"/>
</dbReference>
<dbReference type="CDD" id="cd03689">
    <property type="entry name" value="RF3_II"/>
    <property type="match status" value="1"/>
</dbReference>
<dbReference type="CDD" id="cd16259">
    <property type="entry name" value="RF3_III"/>
    <property type="match status" value="1"/>
</dbReference>
<dbReference type="FunFam" id="2.40.30.10:FF:000040">
    <property type="entry name" value="Peptide chain release factor 3"/>
    <property type="match status" value="1"/>
</dbReference>
<dbReference type="FunFam" id="3.30.70.3280:FF:000001">
    <property type="entry name" value="Peptide chain release factor 3"/>
    <property type="match status" value="1"/>
</dbReference>
<dbReference type="FunFam" id="3.40.50.300:FF:000542">
    <property type="entry name" value="Peptide chain release factor 3"/>
    <property type="match status" value="1"/>
</dbReference>
<dbReference type="Gene3D" id="3.40.50.300">
    <property type="entry name" value="P-loop containing nucleotide triphosphate hydrolases"/>
    <property type="match status" value="3"/>
</dbReference>
<dbReference type="Gene3D" id="3.30.70.3280">
    <property type="entry name" value="Peptide chain release factor 3, domain III"/>
    <property type="match status" value="1"/>
</dbReference>
<dbReference type="HAMAP" id="MF_00072">
    <property type="entry name" value="Rel_fac_3"/>
    <property type="match status" value="1"/>
</dbReference>
<dbReference type="InterPro" id="IPR053905">
    <property type="entry name" value="EF-G-like_DII"/>
</dbReference>
<dbReference type="InterPro" id="IPR035647">
    <property type="entry name" value="EFG_III/V"/>
</dbReference>
<dbReference type="InterPro" id="IPR031157">
    <property type="entry name" value="G_TR_CS"/>
</dbReference>
<dbReference type="InterPro" id="IPR027417">
    <property type="entry name" value="P-loop_NTPase"/>
</dbReference>
<dbReference type="InterPro" id="IPR004548">
    <property type="entry name" value="PrfC"/>
</dbReference>
<dbReference type="InterPro" id="IPR032090">
    <property type="entry name" value="RF3_C"/>
</dbReference>
<dbReference type="InterPro" id="IPR038467">
    <property type="entry name" value="RF3_dom_3_sf"/>
</dbReference>
<dbReference type="InterPro" id="IPR041732">
    <property type="entry name" value="RF3_GTP-bd"/>
</dbReference>
<dbReference type="InterPro" id="IPR005225">
    <property type="entry name" value="Small_GTP-bd"/>
</dbReference>
<dbReference type="InterPro" id="IPR000795">
    <property type="entry name" value="T_Tr_GTP-bd_dom"/>
</dbReference>
<dbReference type="InterPro" id="IPR009000">
    <property type="entry name" value="Transl_B-barrel_sf"/>
</dbReference>
<dbReference type="NCBIfam" id="TIGR00503">
    <property type="entry name" value="prfC"/>
    <property type="match status" value="1"/>
</dbReference>
<dbReference type="NCBIfam" id="NF001964">
    <property type="entry name" value="PRK00741.1"/>
    <property type="match status" value="1"/>
</dbReference>
<dbReference type="NCBIfam" id="TIGR00231">
    <property type="entry name" value="small_GTP"/>
    <property type="match status" value="1"/>
</dbReference>
<dbReference type="PANTHER" id="PTHR43556">
    <property type="entry name" value="PEPTIDE CHAIN RELEASE FACTOR RF3"/>
    <property type="match status" value="1"/>
</dbReference>
<dbReference type="PANTHER" id="PTHR43556:SF2">
    <property type="entry name" value="PEPTIDE CHAIN RELEASE FACTOR RF3"/>
    <property type="match status" value="1"/>
</dbReference>
<dbReference type="Pfam" id="PF22042">
    <property type="entry name" value="EF-G_D2"/>
    <property type="match status" value="1"/>
</dbReference>
<dbReference type="Pfam" id="PF00009">
    <property type="entry name" value="GTP_EFTU"/>
    <property type="match status" value="1"/>
</dbReference>
<dbReference type="Pfam" id="PF16658">
    <property type="entry name" value="RF3_C"/>
    <property type="match status" value="1"/>
</dbReference>
<dbReference type="PRINTS" id="PR00315">
    <property type="entry name" value="ELONGATNFCT"/>
</dbReference>
<dbReference type="SUPFAM" id="SSF54980">
    <property type="entry name" value="EF-G C-terminal domain-like"/>
    <property type="match status" value="1"/>
</dbReference>
<dbReference type="SUPFAM" id="SSF52540">
    <property type="entry name" value="P-loop containing nucleoside triphosphate hydrolases"/>
    <property type="match status" value="1"/>
</dbReference>
<dbReference type="SUPFAM" id="SSF50447">
    <property type="entry name" value="Translation proteins"/>
    <property type="match status" value="1"/>
</dbReference>
<dbReference type="PROSITE" id="PS00301">
    <property type="entry name" value="G_TR_1"/>
    <property type="match status" value="1"/>
</dbReference>
<dbReference type="PROSITE" id="PS51722">
    <property type="entry name" value="G_TR_2"/>
    <property type="match status" value="1"/>
</dbReference>